<feature type="chain" id="PRO_0000199755" description="Homoserine O-succinyltransferase">
    <location>
        <begin position="1"/>
        <end position="314"/>
    </location>
</feature>
<feature type="active site" description="Acyl-thioester intermediate" evidence="1">
    <location>
        <position position="142"/>
    </location>
</feature>
<feature type="active site" description="Proton acceptor" evidence="1">
    <location>
        <position position="235"/>
    </location>
</feature>
<feature type="active site" evidence="1">
    <location>
        <position position="237"/>
    </location>
</feature>
<feature type="binding site" evidence="1">
    <location>
        <position position="163"/>
    </location>
    <ligand>
        <name>substrate</name>
    </ligand>
</feature>
<feature type="binding site" evidence="1">
    <location>
        <position position="192"/>
    </location>
    <ligand>
        <name>substrate</name>
    </ligand>
</feature>
<feature type="binding site" evidence="1">
    <location>
        <position position="249"/>
    </location>
    <ligand>
        <name>substrate</name>
    </ligand>
</feature>
<feature type="site" description="Important for acyl-CoA specificity" evidence="1">
    <location>
        <position position="111"/>
    </location>
</feature>
<feature type="site" description="Important for substrate specificity" evidence="1">
    <location>
        <position position="192"/>
    </location>
</feature>
<protein>
    <recommendedName>
        <fullName evidence="1">Homoserine O-succinyltransferase</fullName>
        <shortName evidence="1">HST</shortName>
        <ecNumber evidence="1">2.3.1.46</ecNumber>
    </recommendedName>
    <alternativeName>
        <fullName evidence="1">Homoserine transsuccinylase</fullName>
        <shortName evidence="1">HTS</shortName>
    </alternativeName>
</protein>
<organism>
    <name type="scientific">Photobacterium profundum (strain SS9)</name>
    <dbReference type="NCBI Taxonomy" id="298386"/>
    <lineage>
        <taxon>Bacteria</taxon>
        <taxon>Pseudomonadati</taxon>
        <taxon>Pseudomonadota</taxon>
        <taxon>Gammaproteobacteria</taxon>
        <taxon>Vibrionales</taxon>
        <taxon>Vibrionaceae</taxon>
        <taxon>Photobacterium</taxon>
    </lineage>
</organism>
<name>METAS_PHOPR</name>
<evidence type="ECO:0000255" key="1">
    <source>
        <dbReference type="HAMAP-Rule" id="MF_00295"/>
    </source>
</evidence>
<sequence>MPIKIPDRLPATDILRSENIFVMSEARAATQGIRPLKVLLLNLMPKKIETETQFLRLLSNSPLQVDVELLRIDNRPTKNTPTEHLDTFYRQFEMVKDRNFDGLIVTGAPLGLVQFEDVLYWEEIQVIMNWAKEHVTSTMFVCWAAQAGLKLLYDLPKRTRKEKISGVYEHKIHDRHHPLLRGFDDLFKAPHSRYADFSPSYLAEHTDLDILATSEVAGVYLASTKDKRNVFVTGHPEYEVDTLHHEYIRDCEQGIEPNMPVNYYPDNNASNTPVASWRSHGHLLFSNWLNYCVYQQTPYDLDDFSEANFTKNDE</sequence>
<reference key="1">
    <citation type="journal article" date="2005" name="Science">
        <title>Life at depth: Photobacterium profundum genome sequence and expression analysis.</title>
        <authorList>
            <person name="Vezzi A."/>
            <person name="Campanaro S."/>
            <person name="D'Angelo M."/>
            <person name="Simonato F."/>
            <person name="Vitulo N."/>
            <person name="Lauro F.M."/>
            <person name="Cestaro A."/>
            <person name="Malacrida G."/>
            <person name="Simionati B."/>
            <person name="Cannata N."/>
            <person name="Romualdi C."/>
            <person name="Bartlett D.H."/>
            <person name="Valle G."/>
        </authorList>
    </citation>
    <scope>NUCLEOTIDE SEQUENCE [LARGE SCALE GENOMIC DNA]</scope>
    <source>
        <strain>ATCC BAA-1253 / SS9</strain>
    </source>
</reference>
<comment type="function">
    <text evidence="1">Transfers a succinyl group from succinyl-CoA to L-homoserine, forming succinyl-L-homoserine.</text>
</comment>
<comment type="catalytic activity">
    <reaction evidence="1">
        <text>L-homoserine + succinyl-CoA = O-succinyl-L-homoserine + CoA</text>
        <dbReference type="Rhea" id="RHEA:22008"/>
        <dbReference type="ChEBI" id="CHEBI:57287"/>
        <dbReference type="ChEBI" id="CHEBI:57292"/>
        <dbReference type="ChEBI" id="CHEBI:57476"/>
        <dbReference type="ChEBI" id="CHEBI:57661"/>
        <dbReference type="EC" id="2.3.1.46"/>
    </reaction>
</comment>
<comment type="pathway">
    <text evidence="1">Amino-acid biosynthesis; L-methionine biosynthesis via de novo pathway; O-succinyl-L-homoserine from L-homoserine: step 1/1.</text>
</comment>
<comment type="subcellular location">
    <subcellularLocation>
        <location evidence="1">Cytoplasm</location>
    </subcellularLocation>
</comment>
<comment type="similarity">
    <text evidence="1">Belongs to the MetA family.</text>
</comment>
<keyword id="KW-0012">Acyltransferase</keyword>
<keyword id="KW-0028">Amino-acid biosynthesis</keyword>
<keyword id="KW-0963">Cytoplasm</keyword>
<keyword id="KW-0486">Methionine biosynthesis</keyword>
<keyword id="KW-1185">Reference proteome</keyword>
<keyword id="KW-0808">Transferase</keyword>
<gene>
    <name evidence="1" type="primary">metAS</name>
    <name type="ordered locus">PBPRA0369</name>
</gene>
<dbReference type="EC" id="2.3.1.46" evidence="1"/>
<dbReference type="EMBL" id="CR378664">
    <property type="protein sequence ID" value="CAG18801.1"/>
    <property type="molecule type" value="Genomic_DNA"/>
</dbReference>
<dbReference type="RefSeq" id="WP_011217160.1">
    <property type="nucleotide sequence ID" value="NC_006370.1"/>
</dbReference>
<dbReference type="SMR" id="Q6LV74"/>
<dbReference type="STRING" id="298386.PBPRA0369"/>
<dbReference type="KEGG" id="ppr:PBPRA0369"/>
<dbReference type="eggNOG" id="COG1897">
    <property type="taxonomic scope" value="Bacteria"/>
</dbReference>
<dbReference type="HOGENOM" id="CLU_057851_0_1_6"/>
<dbReference type="UniPathway" id="UPA00051">
    <property type="reaction ID" value="UER00075"/>
</dbReference>
<dbReference type="Proteomes" id="UP000000593">
    <property type="component" value="Chromosome 1"/>
</dbReference>
<dbReference type="GO" id="GO:0005737">
    <property type="term" value="C:cytoplasm"/>
    <property type="evidence" value="ECO:0007669"/>
    <property type="project" value="UniProtKB-SubCell"/>
</dbReference>
<dbReference type="GO" id="GO:0004414">
    <property type="term" value="F:homoserine O-acetyltransferase activity"/>
    <property type="evidence" value="ECO:0007669"/>
    <property type="project" value="UniProtKB-UniRule"/>
</dbReference>
<dbReference type="GO" id="GO:0008899">
    <property type="term" value="F:homoserine O-succinyltransferase activity"/>
    <property type="evidence" value="ECO:0007669"/>
    <property type="project" value="UniProtKB-EC"/>
</dbReference>
<dbReference type="GO" id="GO:0019281">
    <property type="term" value="P:L-methionine biosynthetic process from homoserine via O-succinyl-L-homoserine and cystathionine"/>
    <property type="evidence" value="ECO:0007669"/>
    <property type="project" value="InterPro"/>
</dbReference>
<dbReference type="CDD" id="cd03131">
    <property type="entry name" value="GATase1_HTS"/>
    <property type="match status" value="1"/>
</dbReference>
<dbReference type="FunFam" id="3.40.50.880:FF:000004">
    <property type="entry name" value="Homoserine O-succinyltransferase"/>
    <property type="match status" value="1"/>
</dbReference>
<dbReference type="Gene3D" id="3.40.50.880">
    <property type="match status" value="1"/>
</dbReference>
<dbReference type="HAMAP" id="MF_00295">
    <property type="entry name" value="MetA_acyltransf"/>
    <property type="match status" value="1"/>
</dbReference>
<dbReference type="InterPro" id="IPR029062">
    <property type="entry name" value="Class_I_gatase-like"/>
</dbReference>
<dbReference type="InterPro" id="IPR005697">
    <property type="entry name" value="HST_MetA"/>
</dbReference>
<dbReference type="InterPro" id="IPR033752">
    <property type="entry name" value="MetA_family"/>
</dbReference>
<dbReference type="NCBIfam" id="TIGR01001">
    <property type="entry name" value="metA"/>
    <property type="match status" value="1"/>
</dbReference>
<dbReference type="PANTHER" id="PTHR20919">
    <property type="entry name" value="HOMOSERINE O-SUCCINYLTRANSFERASE"/>
    <property type="match status" value="1"/>
</dbReference>
<dbReference type="PANTHER" id="PTHR20919:SF0">
    <property type="entry name" value="HOMOSERINE O-SUCCINYLTRANSFERASE"/>
    <property type="match status" value="1"/>
</dbReference>
<dbReference type="Pfam" id="PF04204">
    <property type="entry name" value="HTS"/>
    <property type="match status" value="1"/>
</dbReference>
<dbReference type="PIRSF" id="PIRSF000450">
    <property type="entry name" value="H_ser_succinyltr"/>
    <property type="match status" value="1"/>
</dbReference>
<dbReference type="SUPFAM" id="SSF52317">
    <property type="entry name" value="Class I glutamine amidotransferase-like"/>
    <property type="match status" value="1"/>
</dbReference>
<accession>Q6LV74</accession>
<proteinExistence type="inferred from homology"/>